<organismHost>
    <name type="scientific">Acanthamoeba polyphaga</name>
    <name type="common">Amoeba</name>
    <dbReference type="NCBI Taxonomy" id="5757"/>
</organismHost>
<proteinExistence type="predicted"/>
<evidence type="ECO:0000255" key="1">
    <source>
        <dbReference type="PROSITE-ProRule" id="PRU00134"/>
    </source>
</evidence>
<gene>
    <name type="ordered locus">MIMI_R331</name>
</gene>
<name>YR331_MIMIV</name>
<accession>Q5UQS2</accession>
<dbReference type="EMBL" id="AY653733">
    <property type="protein sequence ID" value="AAV50600.1"/>
    <property type="molecule type" value="Genomic_DNA"/>
</dbReference>
<dbReference type="KEGG" id="vg:9924949"/>
<dbReference type="OrthoDB" id="30014at10239"/>
<dbReference type="Proteomes" id="UP000001134">
    <property type="component" value="Genome"/>
</dbReference>
<dbReference type="GO" id="GO:0003677">
    <property type="term" value="F:DNA binding"/>
    <property type="evidence" value="ECO:0007669"/>
    <property type="project" value="UniProtKB-KW"/>
</dbReference>
<dbReference type="GO" id="GO:0008270">
    <property type="term" value="F:zinc ion binding"/>
    <property type="evidence" value="ECO:0007669"/>
    <property type="project" value="UniProtKB-KW"/>
</dbReference>
<dbReference type="Gene3D" id="6.10.140.2220">
    <property type="match status" value="1"/>
</dbReference>
<dbReference type="InterPro" id="IPR002893">
    <property type="entry name" value="Znf_MYND"/>
</dbReference>
<dbReference type="Pfam" id="PF01753">
    <property type="entry name" value="zf-MYND"/>
    <property type="match status" value="1"/>
</dbReference>
<dbReference type="SUPFAM" id="SSF144232">
    <property type="entry name" value="HIT/MYND zinc finger-like"/>
    <property type="match status" value="1"/>
</dbReference>
<dbReference type="PROSITE" id="PS01360">
    <property type="entry name" value="ZF_MYND_1"/>
    <property type="match status" value="1"/>
</dbReference>
<dbReference type="PROSITE" id="PS50865">
    <property type="entry name" value="ZF_MYND_2"/>
    <property type="match status" value="1"/>
</dbReference>
<protein>
    <recommendedName>
        <fullName>Putative zinc finger MYND domain-containing protein R331</fullName>
    </recommendedName>
</protein>
<sequence>MPIIAVISKNNCQFDDLENYVLPLLYQYHDETTRLQLKNKLNDYLWEIIEPYVTFINCQSDIFMETICTHLVKEFPDKKLDDFFYHTESSFSFPKKHTELMYCQPTWSYQKDQEVNMNFIGCLFSLKHNVIENTCIVIANNYDISTQNNIVIGDVTKNDILRMVRRRYFFSAELIKNDTITKYYYQNPGYLVSKVFDLKEQDTIEKLTVGFLKYNLSFYCNQNKNQYVNKIATRINGLYQLYGDVLVLNEMDEHVYTNLSTHELRRLNVLAYGRLYDRQLKADEIHEESHVEVDEQGKEIEKKKTPLWSKYIIIDKRMSEWQNNKNKCFYCNKNIEKPVVCNKCFRIKYCSEKCQSEYNSYHSDDCINPKSITN</sequence>
<reference key="1">
    <citation type="journal article" date="2004" name="Science">
        <title>The 1.2-megabase genome sequence of Mimivirus.</title>
        <authorList>
            <person name="Raoult D."/>
            <person name="Audic S."/>
            <person name="Robert C."/>
            <person name="Abergel C."/>
            <person name="Renesto P."/>
            <person name="Ogata H."/>
            <person name="La Scola B."/>
            <person name="Susan M."/>
            <person name="Claverie J.-M."/>
        </authorList>
    </citation>
    <scope>NUCLEOTIDE SEQUENCE [LARGE SCALE GENOMIC DNA]</scope>
    <source>
        <strain>Rowbotham-Bradford</strain>
    </source>
</reference>
<organism>
    <name type="scientific">Acanthamoeba polyphaga mimivirus</name>
    <name type="common">APMV</name>
    <dbReference type="NCBI Taxonomy" id="212035"/>
    <lineage>
        <taxon>Viruses</taxon>
        <taxon>Varidnaviria</taxon>
        <taxon>Bamfordvirae</taxon>
        <taxon>Nucleocytoviricota</taxon>
        <taxon>Megaviricetes</taxon>
        <taxon>Imitervirales</taxon>
        <taxon>Mimiviridae</taxon>
        <taxon>Megamimivirinae</taxon>
        <taxon>Mimivirus</taxon>
        <taxon>Mimivirus bradfordmassiliense</taxon>
    </lineage>
</organism>
<keyword id="KW-0238">DNA-binding</keyword>
<keyword id="KW-0479">Metal-binding</keyword>
<keyword id="KW-1185">Reference proteome</keyword>
<keyword id="KW-0862">Zinc</keyword>
<keyword id="KW-0863">Zinc-finger</keyword>
<feature type="chain" id="PRO_0000218326" description="Putative zinc finger MYND domain-containing protein R331">
    <location>
        <begin position="1"/>
        <end position="374"/>
    </location>
</feature>
<feature type="zinc finger region" description="MYND-type" evidence="1">
    <location>
        <begin position="328"/>
        <end position="366"/>
    </location>
</feature>
<feature type="binding site" evidence="1">
    <location>
        <position position="328"/>
    </location>
    <ligand>
        <name>Zn(2+)</name>
        <dbReference type="ChEBI" id="CHEBI:29105"/>
        <label>1</label>
    </ligand>
</feature>
<feature type="binding site" evidence="1">
    <location>
        <position position="331"/>
    </location>
    <ligand>
        <name>Zn(2+)</name>
        <dbReference type="ChEBI" id="CHEBI:29105"/>
        <label>1</label>
    </ligand>
</feature>
<feature type="binding site" evidence="1">
    <location>
        <position position="341"/>
    </location>
    <ligand>
        <name>Zn(2+)</name>
        <dbReference type="ChEBI" id="CHEBI:29105"/>
        <label>2</label>
    </ligand>
</feature>
<feature type="binding site" evidence="1">
    <location>
        <position position="344"/>
    </location>
    <ligand>
        <name>Zn(2+)</name>
        <dbReference type="ChEBI" id="CHEBI:29105"/>
        <label>2</label>
    </ligand>
</feature>
<feature type="binding site" evidence="1">
    <location>
        <position position="350"/>
    </location>
    <ligand>
        <name>Zn(2+)</name>
        <dbReference type="ChEBI" id="CHEBI:29105"/>
        <label>1</label>
    </ligand>
</feature>
<feature type="binding site" evidence="1">
    <location>
        <position position="354"/>
    </location>
    <ligand>
        <name>Zn(2+)</name>
        <dbReference type="ChEBI" id="CHEBI:29105"/>
        <label>1</label>
    </ligand>
</feature>
<feature type="binding site" evidence="1">
    <location>
        <position position="362"/>
    </location>
    <ligand>
        <name>Zn(2+)</name>
        <dbReference type="ChEBI" id="CHEBI:29105"/>
        <label>2</label>
    </ligand>
</feature>
<feature type="binding site" evidence="1">
    <location>
        <position position="366"/>
    </location>
    <ligand>
        <name>Zn(2+)</name>
        <dbReference type="ChEBI" id="CHEBI:29105"/>
        <label>2</label>
    </ligand>
</feature>